<keyword id="KW-0687">Ribonucleoprotein</keyword>
<keyword id="KW-0689">Ribosomal protein</keyword>
<keyword id="KW-0694">RNA-binding</keyword>
<keyword id="KW-0699">rRNA-binding</keyword>
<proteinExistence type="inferred from homology"/>
<sequence length="311" mass="34272">MAIERKFVNDGFVKASMDEYFAEQLNRAGYGGMELNRTPMGTQIVIYSEKPGMVIGKAGKVIRKLTRDVAARYNLENPQIDAQEVKKPELNAQMMASRLAASIERGWYFRKAGHNTLRAVMNAGALGCEVVISGKLTGARSRVEKFVDGYIKHSGNPVDEVVDEGFAVAIKKLGTLGCKVRIIQPGVVLPDSYTTTEPSEPVTEPVEKPAEKPAAKPAEKPVEAPKKESAAKPKTPAVAPEKPVETAEVAEPEEAEEEPQAEVAEDLEEAEVIQVEGSEELRRQVNGVWQHKHEGYDYWHPMARVHKEAKE</sequence>
<feature type="chain" id="PRO_0000230745" description="Small ribosomal subunit protein uS3">
    <location>
        <begin position="1"/>
        <end position="311"/>
    </location>
</feature>
<feature type="domain" description="KH type-2" evidence="1">
    <location>
        <begin position="17"/>
        <end position="86"/>
    </location>
</feature>
<feature type="region of interest" description="Disordered" evidence="2">
    <location>
        <begin position="190"/>
        <end position="267"/>
    </location>
</feature>
<feature type="compositionally biased region" description="Low complexity" evidence="2">
    <location>
        <begin position="194"/>
        <end position="204"/>
    </location>
</feature>
<feature type="compositionally biased region" description="Basic and acidic residues" evidence="2">
    <location>
        <begin position="205"/>
        <end position="231"/>
    </location>
</feature>
<feature type="compositionally biased region" description="Low complexity" evidence="2">
    <location>
        <begin position="232"/>
        <end position="247"/>
    </location>
</feature>
<feature type="compositionally biased region" description="Acidic residues" evidence="2">
    <location>
        <begin position="248"/>
        <end position="267"/>
    </location>
</feature>
<accession>Q46GA1</accession>
<gene>
    <name evidence="1" type="primary">rps3</name>
    <name type="ordered locus">Mbar_A0104</name>
</gene>
<organism>
    <name type="scientific">Methanosarcina barkeri (strain Fusaro / DSM 804)</name>
    <dbReference type="NCBI Taxonomy" id="269797"/>
    <lineage>
        <taxon>Archaea</taxon>
        <taxon>Methanobacteriati</taxon>
        <taxon>Methanobacteriota</taxon>
        <taxon>Stenosarchaea group</taxon>
        <taxon>Methanomicrobia</taxon>
        <taxon>Methanosarcinales</taxon>
        <taxon>Methanosarcinaceae</taxon>
        <taxon>Methanosarcina</taxon>
    </lineage>
</organism>
<evidence type="ECO:0000255" key="1">
    <source>
        <dbReference type="HAMAP-Rule" id="MF_01309"/>
    </source>
</evidence>
<evidence type="ECO:0000256" key="2">
    <source>
        <dbReference type="SAM" id="MobiDB-lite"/>
    </source>
</evidence>
<evidence type="ECO:0000305" key="3"/>
<name>RS3_METBF</name>
<comment type="function">
    <text evidence="1">Binds the lower part of the 30S subunit head.</text>
</comment>
<comment type="subunit">
    <text evidence="1">Part of the 30S ribosomal subunit.</text>
</comment>
<comment type="similarity">
    <text evidence="1">Belongs to the universal ribosomal protein uS3 family.</text>
</comment>
<dbReference type="EMBL" id="CP000099">
    <property type="protein sequence ID" value="AAZ69091.1"/>
    <property type="molecule type" value="Genomic_DNA"/>
</dbReference>
<dbReference type="SMR" id="Q46GA1"/>
<dbReference type="STRING" id="269797.Mbar_A0104"/>
<dbReference type="PaxDb" id="269797-Mbar_A0104"/>
<dbReference type="KEGG" id="mba:Mbar_A0104"/>
<dbReference type="eggNOG" id="arCOG04097">
    <property type="taxonomic scope" value="Archaea"/>
</dbReference>
<dbReference type="HOGENOM" id="CLU_058591_1_0_2"/>
<dbReference type="OrthoDB" id="9126at2157"/>
<dbReference type="GO" id="GO:0022627">
    <property type="term" value="C:cytosolic small ribosomal subunit"/>
    <property type="evidence" value="ECO:0007669"/>
    <property type="project" value="TreeGrafter"/>
</dbReference>
<dbReference type="GO" id="GO:0019843">
    <property type="term" value="F:rRNA binding"/>
    <property type="evidence" value="ECO:0007669"/>
    <property type="project" value="UniProtKB-UniRule"/>
</dbReference>
<dbReference type="GO" id="GO:0003735">
    <property type="term" value="F:structural constituent of ribosome"/>
    <property type="evidence" value="ECO:0007669"/>
    <property type="project" value="InterPro"/>
</dbReference>
<dbReference type="GO" id="GO:0006412">
    <property type="term" value="P:translation"/>
    <property type="evidence" value="ECO:0007669"/>
    <property type="project" value="UniProtKB-UniRule"/>
</dbReference>
<dbReference type="CDD" id="cd02411">
    <property type="entry name" value="KH-II_30S_S3_arch"/>
    <property type="match status" value="1"/>
</dbReference>
<dbReference type="FunFam" id="3.30.1140.32:FF:000012">
    <property type="entry name" value="30S ribosomal protein S3"/>
    <property type="match status" value="1"/>
</dbReference>
<dbReference type="FunFam" id="3.30.300.20:FF:000001">
    <property type="entry name" value="30S ribosomal protein S3"/>
    <property type="match status" value="1"/>
</dbReference>
<dbReference type="Gene3D" id="3.30.300.20">
    <property type="match status" value="1"/>
</dbReference>
<dbReference type="Gene3D" id="3.30.1140.32">
    <property type="entry name" value="Ribosomal protein S3, C-terminal domain"/>
    <property type="match status" value="1"/>
</dbReference>
<dbReference type="HAMAP" id="MF_01309_A">
    <property type="entry name" value="Ribosomal_uS3_A"/>
    <property type="match status" value="1"/>
</dbReference>
<dbReference type="InterPro" id="IPR004087">
    <property type="entry name" value="KH_dom"/>
</dbReference>
<dbReference type="InterPro" id="IPR015946">
    <property type="entry name" value="KH_dom-like_a/b"/>
</dbReference>
<dbReference type="InterPro" id="IPR004044">
    <property type="entry name" value="KH_dom_type_2"/>
</dbReference>
<dbReference type="InterPro" id="IPR009019">
    <property type="entry name" value="KH_sf_prok-type"/>
</dbReference>
<dbReference type="InterPro" id="IPR036419">
    <property type="entry name" value="Ribosomal_S3_C_sf"/>
</dbReference>
<dbReference type="InterPro" id="IPR027488">
    <property type="entry name" value="Ribosomal_uS3_arc"/>
</dbReference>
<dbReference type="InterPro" id="IPR001351">
    <property type="entry name" value="Ribosomal_uS3_C"/>
</dbReference>
<dbReference type="InterPro" id="IPR005703">
    <property type="entry name" value="Ribosomal_uS3_euk/arc"/>
</dbReference>
<dbReference type="NCBIfam" id="NF003219">
    <property type="entry name" value="PRK04191.1"/>
    <property type="match status" value="1"/>
</dbReference>
<dbReference type="NCBIfam" id="TIGR01008">
    <property type="entry name" value="uS3_euk_arch"/>
    <property type="match status" value="1"/>
</dbReference>
<dbReference type="PANTHER" id="PTHR11760">
    <property type="entry name" value="30S/40S RIBOSOMAL PROTEIN S3"/>
    <property type="match status" value="1"/>
</dbReference>
<dbReference type="PANTHER" id="PTHR11760:SF32">
    <property type="entry name" value="SMALL RIBOSOMAL SUBUNIT PROTEIN US3"/>
    <property type="match status" value="1"/>
</dbReference>
<dbReference type="Pfam" id="PF07650">
    <property type="entry name" value="KH_2"/>
    <property type="match status" value="1"/>
</dbReference>
<dbReference type="Pfam" id="PF00189">
    <property type="entry name" value="Ribosomal_S3_C"/>
    <property type="match status" value="1"/>
</dbReference>
<dbReference type="SMART" id="SM00322">
    <property type="entry name" value="KH"/>
    <property type="match status" value="1"/>
</dbReference>
<dbReference type="SUPFAM" id="SSF54814">
    <property type="entry name" value="Prokaryotic type KH domain (KH-domain type II)"/>
    <property type="match status" value="1"/>
</dbReference>
<dbReference type="SUPFAM" id="SSF54821">
    <property type="entry name" value="Ribosomal protein S3 C-terminal domain"/>
    <property type="match status" value="1"/>
</dbReference>
<dbReference type="PROSITE" id="PS50823">
    <property type="entry name" value="KH_TYPE_2"/>
    <property type="match status" value="1"/>
</dbReference>
<reference key="1">
    <citation type="journal article" date="2006" name="J. Bacteriol.">
        <title>The Methanosarcina barkeri genome: comparative analysis with Methanosarcina acetivorans and Methanosarcina mazei reveals extensive rearrangement within methanosarcinal genomes.</title>
        <authorList>
            <person name="Maeder D.L."/>
            <person name="Anderson I."/>
            <person name="Brettin T.S."/>
            <person name="Bruce D.C."/>
            <person name="Gilna P."/>
            <person name="Han C.S."/>
            <person name="Lapidus A."/>
            <person name="Metcalf W.W."/>
            <person name="Saunders E."/>
            <person name="Tapia R."/>
            <person name="Sowers K.R."/>
        </authorList>
    </citation>
    <scope>NUCLEOTIDE SEQUENCE [LARGE SCALE GENOMIC DNA]</scope>
    <source>
        <strain>Fusaro / DSM 804</strain>
    </source>
</reference>
<protein>
    <recommendedName>
        <fullName evidence="1">Small ribosomal subunit protein uS3</fullName>
    </recommendedName>
    <alternativeName>
        <fullName evidence="3">30S ribosomal protein S3</fullName>
    </alternativeName>
</protein>